<evidence type="ECO:0000250" key="1">
    <source>
        <dbReference type="UniProtKB" id="P13006"/>
    </source>
</evidence>
<evidence type="ECO:0000255" key="2"/>
<evidence type="ECO:0000255" key="3">
    <source>
        <dbReference type="PROSITE-ProRule" id="PRU00498"/>
    </source>
</evidence>
<evidence type="ECO:0000269" key="4">
    <source>
    </source>
</evidence>
<evidence type="ECO:0000269" key="5">
    <source>
    </source>
</evidence>
<evidence type="ECO:0000303" key="6">
    <source>
    </source>
</evidence>
<evidence type="ECO:0000305" key="7"/>
<evidence type="ECO:0000312" key="8">
    <source>
        <dbReference type="EMBL" id="KGO54335.1"/>
    </source>
</evidence>
<sequence length="604" mass="65733">MKLLGLLSGLVVVATALPQADFDLQSSLLTDPTKVAGTTFDYIIAGGGLTGLTVAARLTENPNITVLVIERGFYESNIGPIIENLNHYGDIFGTSVDQAFETIPLAIHNRTEIVRSGKGLGGSTLVNGGSWTRPHKAQVDSWESVFGMEGWNWDSLLPYMKKIEAARAPNAEQIAAGHYYDPSCHGTDGIVHVGPRDTGESFSPMIKSLMKNANNSGIPVQKDLGCGVPHGISMILNDVHEDQTRSDAAREWLLPNYQRSNLKILTGQMVGKVLFDTTTTTPKAVGVNFGTHAKVNFDVHARHEVLLASGSAVSPQILEHSGVGLKAVLDNVGVEQLVDLPVGLNLQDQTTTTVRSNINSIGAGQGQAAYFATFNETFGDQAPRAHQLLNTKLEEWAKDVVSRGGFHNETALLVQYENYRDWLVNEDVSFAEIFIDTAGKLNLDLWDLIPFTRGYVHILDSDPYLRRFAYDPQFFLNELDVLGQAAASKLAREISNTGEMTQYFNGEAIPGNNLAYNATLDDWVDHVKQNFRANYHGVGTCSMMSKELGGVVDAAARVYGVESLRVIDGSIPPTQLSSHVMTVFYGMAQKVSEAILADYNATVN</sequence>
<gene>
    <name evidence="6" type="primary">gox1</name>
    <name evidence="8" type="ORF">PEX2_038230</name>
</gene>
<accession>A0A0A2K2F6</accession>
<accession>Q3Y5H6</accession>
<reference key="1">
    <citation type="journal article" date="2007" name="Phytopathology">
        <title>Involvement of gluconic acid and glucose oxidase in the pathogenicity of Penicillium expansum in apples.</title>
        <authorList>
            <person name="Hadas Y."/>
            <person name="Goldberg I."/>
            <person name="Pines O."/>
            <person name="Prusky D."/>
        </authorList>
    </citation>
    <scope>NUCLEOTIDE SEQUENCE [MRNA] OF 84-323</scope>
    <scope>FUNCTION</scope>
    <scope>INDUCTION</scope>
    <scope>CATALYTIC ACTIVITY</scope>
</reference>
<reference key="2">
    <citation type="journal article" date="2015" name="Mol. Plant Microbe Interact.">
        <title>Genome, transcriptome, and functional analyses of Penicillium expansum provide new insights into secondary metabolism and pathogenicity.</title>
        <authorList>
            <person name="Ballester A.R."/>
            <person name="Marcet-Houben M."/>
            <person name="Levin E."/>
            <person name="Sela N."/>
            <person name="Selma-Lazaro C."/>
            <person name="Carmona L."/>
            <person name="Wisniewski M."/>
            <person name="Droby S."/>
            <person name="Gonzalez-Candelas L."/>
            <person name="Gabaldon T."/>
        </authorList>
    </citation>
    <scope>NUCLEOTIDE SEQUENCE [LARGE SCALE GENOMIC DNA]</scope>
    <source>
        <strain>MD-8</strain>
    </source>
</reference>
<reference key="3">
    <citation type="journal article" date="2012" name="Mol. Plant Microbe Interact.">
        <title>A Penicillium expansum glucose oxidase-encoding gene, GOX2, is essential for gluconic acid production and acidification during colonization of deciduous fruit.</title>
        <authorList>
            <person name="Barad S."/>
            <person name="Horowitz S.B."/>
            <person name="Moscovitz O."/>
            <person name="Lichter A."/>
            <person name="Sherman A."/>
            <person name="Prusky D."/>
        </authorList>
    </citation>
    <scope>FUNCTION</scope>
    <scope>INDUCTION</scope>
    <scope>CATALYTIC ACTIVITY</scope>
</reference>
<feature type="signal peptide" evidence="2">
    <location>
        <begin position="1"/>
        <end position="16"/>
    </location>
</feature>
<feature type="chain" id="PRO_5009752757" description="Glucose oxidase 2">
    <location>
        <begin position="17"/>
        <end position="604"/>
    </location>
</feature>
<feature type="active site" description="Proton acceptor" evidence="1">
    <location>
        <position position="536"/>
    </location>
</feature>
<feature type="binding site" evidence="1">
    <location>
        <position position="49"/>
    </location>
    <ligand>
        <name>FAD</name>
        <dbReference type="ChEBI" id="CHEBI:57692"/>
    </ligand>
</feature>
<feature type="binding site" evidence="1">
    <location>
        <position position="50"/>
    </location>
    <ligand>
        <name>FAD</name>
        <dbReference type="ChEBI" id="CHEBI:57692"/>
    </ligand>
</feature>
<feature type="binding site" evidence="1">
    <location>
        <position position="70"/>
    </location>
    <ligand>
        <name>FAD</name>
        <dbReference type="ChEBI" id="CHEBI:57692"/>
    </ligand>
</feature>
<feature type="binding site" evidence="1">
    <location>
        <position position="123"/>
    </location>
    <ligand>
        <name>FAD</name>
        <dbReference type="ChEBI" id="CHEBI:57692"/>
    </ligand>
</feature>
<feature type="binding site" evidence="1">
    <location>
        <position position="127"/>
    </location>
    <ligand>
        <name>FAD</name>
        <dbReference type="ChEBI" id="CHEBI:57692"/>
    </ligand>
</feature>
<feature type="binding site" evidence="1">
    <location>
        <position position="128"/>
    </location>
    <ligand>
        <name>FAD</name>
        <dbReference type="ChEBI" id="CHEBI:57692"/>
    </ligand>
</feature>
<feature type="binding site" evidence="1">
    <location>
        <position position="130"/>
    </location>
    <ligand>
        <name>FAD</name>
        <dbReference type="ChEBI" id="CHEBI:57692"/>
    </ligand>
</feature>
<feature type="binding site" evidence="1">
    <location>
        <position position="270"/>
    </location>
    <ligand>
        <name>FAD</name>
        <dbReference type="ChEBI" id="CHEBI:57692"/>
    </ligand>
</feature>
<feature type="binding site" evidence="1">
    <location>
        <position position="557"/>
    </location>
    <ligand>
        <name>O2</name>
        <dbReference type="ChEBI" id="CHEBI:15379"/>
    </ligand>
</feature>
<feature type="binding site" evidence="1">
    <location>
        <position position="558"/>
    </location>
    <ligand>
        <name>O2</name>
        <dbReference type="ChEBI" id="CHEBI:15379"/>
    </ligand>
</feature>
<feature type="binding site" evidence="1">
    <location>
        <position position="569"/>
    </location>
    <ligand>
        <name>FAD</name>
        <dbReference type="ChEBI" id="CHEBI:57692"/>
    </ligand>
</feature>
<feature type="binding site" evidence="1">
    <location>
        <position position="581"/>
    </location>
    <ligand>
        <name>FAD</name>
        <dbReference type="ChEBI" id="CHEBI:57692"/>
    </ligand>
</feature>
<feature type="glycosylation site" description="N-linked (GlcNAc...) asparagine" evidence="3">
    <location>
        <position position="63"/>
    </location>
</feature>
<feature type="glycosylation site" description="N-linked (GlcNAc...) asparagine" evidence="3">
    <location>
        <position position="109"/>
    </location>
</feature>
<feature type="glycosylation site" description="N-linked (GlcNAc...) asparagine" evidence="3">
    <location>
        <position position="214"/>
    </location>
</feature>
<feature type="glycosylation site" description="N-linked (GlcNAc...) asparagine" evidence="3">
    <location>
        <position position="375"/>
    </location>
</feature>
<feature type="glycosylation site" description="N-linked (GlcNAc...) asparagine" evidence="3">
    <location>
        <position position="408"/>
    </location>
</feature>
<feature type="glycosylation site" description="N-linked (GlcNAc...) asparagine" evidence="3">
    <location>
        <position position="517"/>
    </location>
</feature>
<feature type="glycosylation site" description="N-linked (GlcNAc...) asparagine" evidence="3">
    <location>
        <position position="600"/>
    </location>
</feature>
<feature type="disulfide bond" evidence="1">
    <location>
        <begin position="184"/>
        <end position="226"/>
    </location>
</feature>
<name>GOX2_PENEN</name>
<proteinExistence type="evidence at protein level"/>
<keyword id="KW-0134">Cell wall</keyword>
<keyword id="KW-0963">Cytoplasm</keyword>
<keyword id="KW-1015">Disulfide bond</keyword>
<keyword id="KW-0272">Extracellular matrix</keyword>
<keyword id="KW-0274">FAD</keyword>
<keyword id="KW-0285">Flavoprotein</keyword>
<keyword id="KW-0325">Glycoprotein</keyword>
<keyword id="KW-0560">Oxidoreductase</keyword>
<keyword id="KW-1185">Reference proteome</keyword>
<keyword id="KW-0964">Secreted</keyword>
<keyword id="KW-0732">Signal</keyword>
<keyword id="KW-0843">Virulence</keyword>
<protein>
    <recommendedName>
        <fullName evidence="6">Glucose oxidase 2</fullName>
        <shortName evidence="6">GOX</shortName>
        <ecNumber evidence="4 5">1.1.3.4</ecNumber>
    </recommendedName>
    <alternativeName>
        <fullName evidence="7">Beta-D-glucose:oxygen 1-oxido-reductase 2</fullName>
    </alternativeName>
</protein>
<dbReference type="EC" id="1.1.3.4" evidence="4 5"/>
<dbReference type="EMBL" id="DQ157372">
    <property type="protein sequence ID" value="AAZ82018.1"/>
    <property type="molecule type" value="mRNA"/>
</dbReference>
<dbReference type="EMBL" id="JQFZ01000229">
    <property type="protein sequence ID" value="KGO54335.1"/>
    <property type="molecule type" value="Genomic_DNA"/>
</dbReference>
<dbReference type="RefSeq" id="XP_016596803.1">
    <property type="nucleotide sequence ID" value="XM_016741098.1"/>
</dbReference>
<dbReference type="SMR" id="A0A0A2K2F6"/>
<dbReference type="STRING" id="27334.A0A0A2K2F6"/>
<dbReference type="GeneID" id="27676517"/>
<dbReference type="HOGENOM" id="CLU_002865_6_0_1"/>
<dbReference type="OrthoDB" id="269227at2759"/>
<dbReference type="PhylomeDB" id="A0A0A2K2F6"/>
<dbReference type="Proteomes" id="UP000030143">
    <property type="component" value="Unassembled WGS sequence"/>
</dbReference>
<dbReference type="GO" id="GO:0005737">
    <property type="term" value="C:cytoplasm"/>
    <property type="evidence" value="ECO:0007669"/>
    <property type="project" value="UniProtKB-SubCell"/>
</dbReference>
<dbReference type="GO" id="GO:0005576">
    <property type="term" value="C:extracellular region"/>
    <property type="evidence" value="ECO:0007669"/>
    <property type="project" value="UniProtKB-SubCell"/>
</dbReference>
<dbReference type="GO" id="GO:0050660">
    <property type="term" value="F:flavin adenine dinucleotide binding"/>
    <property type="evidence" value="ECO:0007669"/>
    <property type="project" value="InterPro"/>
</dbReference>
<dbReference type="GO" id="GO:0016614">
    <property type="term" value="F:oxidoreductase activity, acting on CH-OH group of donors"/>
    <property type="evidence" value="ECO:0007669"/>
    <property type="project" value="InterPro"/>
</dbReference>
<dbReference type="GO" id="GO:0044550">
    <property type="term" value="P:secondary metabolite biosynthetic process"/>
    <property type="evidence" value="ECO:0007669"/>
    <property type="project" value="UniProtKB-ARBA"/>
</dbReference>
<dbReference type="Gene3D" id="3.50.50.60">
    <property type="entry name" value="FAD/NAD(P)-binding domain"/>
    <property type="match status" value="1"/>
</dbReference>
<dbReference type="Gene3D" id="4.10.450.10">
    <property type="entry name" value="Glucose Oxidase, domain 2"/>
    <property type="match status" value="1"/>
</dbReference>
<dbReference type="Gene3D" id="3.30.560.10">
    <property type="entry name" value="Glucose Oxidase, domain 3"/>
    <property type="match status" value="1"/>
</dbReference>
<dbReference type="InterPro" id="IPR036188">
    <property type="entry name" value="FAD/NAD-bd_sf"/>
</dbReference>
<dbReference type="InterPro" id="IPR027424">
    <property type="entry name" value="Glucose_Oxidase_domain_2"/>
</dbReference>
<dbReference type="InterPro" id="IPR012132">
    <property type="entry name" value="GMC_OxRdtase"/>
</dbReference>
<dbReference type="InterPro" id="IPR000172">
    <property type="entry name" value="GMC_OxRdtase_N"/>
</dbReference>
<dbReference type="InterPro" id="IPR007867">
    <property type="entry name" value="GMC_OxRtase_C"/>
</dbReference>
<dbReference type="PANTHER" id="PTHR11552">
    <property type="entry name" value="GLUCOSE-METHANOL-CHOLINE GMC OXIDOREDUCTASE"/>
    <property type="match status" value="1"/>
</dbReference>
<dbReference type="PANTHER" id="PTHR11552:SF201">
    <property type="entry name" value="GLUCOSE-METHANOL-CHOLINE OXIDOREDUCTASE N-TERMINAL DOMAIN-CONTAINING PROTEIN"/>
    <property type="match status" value="1"/>
</dbReference>
<dbReference type="Pfam" id="PF05199">
    <property type="entry name" value="GMC_oxred_C"/>
    <property type="match status" value="1"/>
</dbReference>
<dbReference type="Pfam" id="PF00732">
    <property type="entry name" value="GMC_oxred_N"/>
    <property type="match status" value="1"/>
</dbReference>
<dbReference type="PIRSF" id="PIRSF000137">
    <property type="entry name" value="Alcohol_oxidase"/>
    <property type="match status" value="1"/>
</dbReference>
<dbReference type="SUPFAM" id="SSF54373">
    <property type="entry name" value="FAD-linked reductases, C-terminal domain"/>
    <property type="match status" value="1"/>
</dbReference>
<dbReference type="SUPFAM" id="SSF51905">
    <property type="entry name" value="FAD/NAD(P)-binding domain"/>
    <property type="match status" value="1"/>
</dbReference>
<dbReference type="PROSITE" id="PS00623">
    <property type="entry name" value="GMC_OXRED_1"/>
    <property type="match status" value="1"/>
</dbReference>
<dbReference type="PROSITE" id="PS00624">
    <property type="entry name" value="GMC_OXRED_2"/>
    <property type="match status" value="1"/>
</dbReference>
<comment type="function">
    <text evidence="4 5">Glucose oxidase catalyzes the oxidation of beta-D-glucose to D-glucono-delta-lactone and hydrogen peroxide in the presence of molecular oxygen. D-glucono-delta-lactone is sequentially hydrolyzed by lactonase to D-gluconic acid, and the resulting hydrogen peroxide is hydrolyzed by catalase to oxygen and water (PubMed:18943660, PubMed:22352719). Acts as a key factor contributing to fungal disease of apple (PubMed:18943660, PubMed:22352719). The production of gluconic acid leads to host tissue acidification that enhances the expression of pectolytic enzymes and the establishment of conditions for necrotrophic development of P.expansum (PubMed:18943660, PubMed:22352719).</text>
</comment>
<comment type="catalytic activity">
    <reaction evidence="4 5">
        <text>beta-D-glucose + O2 = D-glucono-1,5-lactone + H2O2</text>
        <dbReference type="Rhea" id="RHEA:11428"/>
        <dbReference type="ChEBI" id="CHEBI:15379"/>
        <dbReference type="ChEBI" id="CHEBI:15903"/>
        <dbReference type="ChEBI" id="CHEBI:16217"/>
        <dbReference type="ChEBI" id="CHEBI:16240"/>
        <dbReference type="EC" id="1.1.3.4"/>
    </reaction>
    <physiologicalReaction direction="left-to-right" evidence="4 5">
        <dbReference type="Rhea" id="RHEA:11429"/>
    </physiologicalReaction>
</comment>
<comment type="cofactor">
    <cofactor evidence="1">
        <name>FAD</name>
        <dbReference type="ChEBI" id="CHEBI:57692"/>
    </cofactor>
</comment>
<comment type="subunit">
    <text evidence="1">Homodimer.</text>
</comment>
<comment type="subcellular location">
    <subcellularLocation>
        <location evidence="1">Secreted</location>
    </subcellularLocation>
    <subcellularLocation>
        <location evidence="1">Secreted</location>
        <location evidence="1">Cell wall</location>
    </subcellularLocation>
    <subcellularLocation>
        <location evidence="1">Cytoplasm</location>
    </subcellularLocation>
    <subcellularLocation>
        <location evidence="1">Secreted</location>
        <location evidence="1">Extracellular space</location>
        <location evidence="1">Extracellular matrix</location>
    </subcellularLocation>
</comment>
<comment type="induction">
    <text evidence="4 5">Expression is negatively controlled by decreasing oxygen levels (PubMed:18943660). Expression is highest at pH 7.0 and decreases by 68, 83, and 89% at pH 9.0, 5.0, and 4.0, respectively (PubMed:22352719).</text>
</comment>
<comment type="similarity">
    <text evidence="7">Belongs to the GMC oxidoreductase family.</text>
</comment>
<organism>
    <name type="scientific">Penicillium expansum</name>
    <name type="common">Blue mold rot fungus</name>
    <dbReference type="NCBI Taxonomy" id="27334"/>
    <lineage>
        <taxon>Eukaryota</taxon>
        <taxon>Fungi</taxon>
        <taxon>Dikarya</taxon>
        <taxon>Ascomycota</taxon>
        <taxon>Pezizomycotina</taxon>
        <taxon>Eurotiomycetes</taxon>
        <taxon>Eurotiomycetidae</taxon>
        <taxon>Eurotiales</taxon>
        <taxon>Aspergillaceae</taxon>
        <taxon>Penicillium</taxon>
    </lineage>
</organism>